<keyword id="KW-0686">Riboflavin biosynthesis</keyword>
<keyword id="KW-0808">Transferase</keyword>
<name>RISB_SACI6</name>
<dbReference type="EC" id="2.5.1.78" evidence="1"/>
<dbReference type="EMBL" id="CP001402">
    <property type="protein sequence ID" value="ACR42354.1"/>
    <property type="molecule type" value="Genomic_DNA"/>
</dbReference>
<dbReference type="RefSeq" id="WP_012711683.1">
    <property type="nucleotide sequence ID" value="NC_012726.1"/>
</dbReference>
<dbReference type="SMR" id="C4KIE0"/>
<dbReference type="GeneID" id="84062057"/>
<dbReference type="KEGG" id="sid:M164_1750"/>
<dbReference type="HOGENOM" id="CLU_089358_3_1_2"/>
<dbReference type="UniPathway" id="UPA00275">
    <property type="reaction ID" value="UER00404"/>
</dbReference>
<dbReference type="Proteomes" id="UP000001479">
    <property type="component" value="Chromosome"/>
</dbReference>
<dbReference type="GO" id="GO:0009349">
    <property type="term" value="C:riboflavin synthase complex"/>
    <property type="evidence" value="ECO:0007669"/>
    <property type="project" value="InterPro"/>
</dbReference>
<dbReference type="GO" id="GO:0000906">
    <property type="term" value="F:6,7-dimethyl-8-ribityllumazine synthase activity"/>
    <property type="evidence" value="ECO:0007669"/>
    <property type="project" value="UniProtKB-UniRule"/>
</dbReference>
<dbReference type="GO" id="GO:0009231">
    <property type="term" value="P:riboflavin biosynthetic process"/>
    <property type="evidence" value="ECO:0007669"/>
    <property type="project" value="UniProtKB-UniRule"/>
</dbReference>
<dbReference type="CDD" id="cd09211">
    <property type="entry name" value="Lumazine_synthase_archaeal"/>
    <property type="match status" value="1"/>
</dbReference>
<dbReference type="FunFam" id="3.40.50.960:FF:000003">
    <property type="entry name" value="6,7-dimethyl-8-ribityllumazine synthase"/>
    <property type="match status" value="1"/>
</dbReference>
<dbReference type="Gene3D" id="3.40.50.960">
    <property type="entry name" value="Lumazine/riboflavin synthase"/>
    <property type="match status" value="1"/>
</dbReference>
<dbReference type="HAMAP" id="MF_00178">
    <property type="entry name" value="Lumazine_synth"/>
    <property type="match status" value="1"/>
</dbReference>
<dbReference type="InterPro" id="IPR034964">
    <property type="entry name" value="LS"/>
</dbReference>
<dbReference type="InterPro" id="IPR002180">
    <property type="entry name" value="LS/RS"/>
</dbReference>
<dbReference type="InterPro" id="IPR036467">
    <property type="entry name" value="LS/RS_sf"/>
</dbReference>
<dbReference type="NCBIfam" id="TIGR00114">
    <property type="entry name" value="lumazine-synth"/>
    <property type="match status" value="1"/>
</dbReference>
<dbReference type="PANTHER" id="PTHR21058:SF0">
    <property type="entry name" value="6,7-DIMETHYL-8-RIBITYLLUMAZINE SYNTHASE"/>
    <property type="match status" value="1"/>
</dbReference>
<dbReference type="PANTHER" id="PTHR21058">
    <property type="entry name" value="6,7-DIMETHYL-8-RIBITYLLUMAZINE SYNTHASE DMRL SYNTHASE LUMAZINE SYNTHASE"/>
    <property type="match status" value="1"/>
</dbReference>
<dbReference type="Pfam" id="PF00885">
    <property type="entry name" value="DMRL_synthase"/>
    <property type="match status" value="1"/>
</dbReference>
<dbReference type="SUPFAM" id="SSF52121">
    <property type="entry name" value="Lumazine synthase"/>
    <property type="match status" value="1"/>
</dbReference>
<proteinExistence type="inferred from homology"/>
<feature type="chain" id="PRO_1000203801" description="6,7-dimethyl-8-ribityllumazine synthase">
    <location>
        <begin position="1"/>
        <end position="154"/>
    </location>
</feature>
<feature type="active site" description="Proton donor" evidence="1">
    <location>
        <position position="79"/>
    </location>
</feature>
<feature type="binding site" evidence="1">
    <location>
        <position position="15"/>
    </location>
    <ligand>
        <name>5-amino-6-(D-ribitylamino)uracil</name>
        <dbReference type="ChEBI" id="CHEBI:15934"/>
    </ligand>
</feature>
<feature type="binding site" evidence="1">
    <location>
        <begin position="47"/>
        <end position="49"/>
    </location>
    <ligand>
        <name>5-amino-6-(D-ribitylamino)uracil</name>
        <dbReference type="ChEBI" id="CHEBI:15934"/>
    </ligand>
</feature>
<feature type="binding site" evidence="1">
    <location>
        <begin position="71"/>
        <end position="73"/>
    </location>
    <ligand>
        <name>5-amino-6-(D-ribitylamino)uracil</name>
        <dbReference type="ChEBI" id="CHEBI:15934"/>
    </ligand>
</feature>
<feature type="binding site" evidence="1">
    <location>
        <begin position="76"/>
        <end position="77"/>
    </location>
    <ligand>
        <name>(2S)-2-hydroxy-3-oxobutyl phosphate</name>
        <dbReference type="ChEBI" id="CHEBI:58830"/>
    </ligand>
</feature>
<feature type="binding site" evidence="1">
    <location>
        <position position="104"/>
    </location>
    <ligand>
        <name>5-amino-6-(D-ribitylamino)uracil</name>
        <dbReference type="ChEBI" id="CHEBI:15934"/>
    </ligand>
</feature>
<feature type="binding site" evidence="1">
    <location>
        <position position="119"/>
    </location>
    <ligand>
        <name>(2S)-2-hydroxy-3-oxobutyl phosphate</name>
        <dbReference type="ChEBI" id="CHEBI:58830"/>
    </ligand>
</feature>
<organism>
    <name type="scientific">Saccharolobus islandicus (strain M.16.4 / Kamchatka #3)</name>
    <name type="common">Sulfolobus islandicus</name>
    <dbReference type="NCBI Taxonomy" id="426118"/>
    <lineage>
        <taxon>Archaea</taxon>
        <taxon>Thermoproteota</taxon>
        <taxon>Thermoprotei</taxon>
        <taxon>Sulfolobales</taxon>
        <taxon>Sulfolobaceae</taxon>
        <taxon>Saccharolobus</taxon>
    </lineage>
</organism>
<protein>
    <recommendedName>
        <fullName evidence="1">6,7-dimethyl-8-ribityllumazine synthase</fullName>
        <shortName evidence="1">DMRL synthase</shortName>
        <shortName evidence="1">LS</shortName>
        <shortName evidence="1">Lumazine synthase</shortName>
        <ecNumber evidence="1">2.5.1.78</ecNumber>
    </recommendedName>
</protein>
<gene>
    <name evidence="1" type="primary">ribH</name>
    <name type="ordered locus">M164_1750</name>
</gene>
<sequence>MQGKSIRLGIVVAEFNYDITQLMLQKALSHAKFLNAEVKVVIKVPGTFDMPLAIKKLLEKDFIDAVVTLGAVIKGETKHDEIVASQTARKIVDLSTEFNKPVTLGIIGHGATHEQAVERIEEYATRAVEAAIKLVQRTRKIDELKEVKETVIID</sequence>
<reference key="1">
    <citation type="journal article" date="2009" name="Proc. Natl. Acad. Sci. U.S.A.">
        <title>Biogeography of the Sulfolobus islandicus pan-genome.</title>
        <authorList>
            <person name="Reno M.L."/>
            <person name="Held N.L."/>
            <person name="Fields C.J."/>
            <person name="Burke P.V."/>
            <person name="Whitaker R.J."/>
        </authorList>
    </citation>
    <scope>NUCLEOTIDE SEQUENCE [LARGE SCALE GENOMIC DNA]</scope>
    <source>
        <strain>M.16.4 / Kamchatka #3</strain>
    </source>
</reference>
<comment type="function">
    <text evidence="1">Catalyzes the formation of 6,7-dimethyl-8-ribityllumazine by condensation of 5-amino-6-(D-ribitylamino)uracil with 3,4-dihydroxy-2-butanone 4-phosphate. This is the penultimate step in the biosynthesis of riboflavin.</text>
</comment>
<comment type="catalytic activity">
    <reaction evidence="1">
        <text>(2S)-2-hydroxy-3-oxobutyl phosphate + 5-amino-6-(D-ribitylamino)uracil = 6,7-dimethyl-8-(1-D-ribityl)lumazine + phosphate + 2 H2O + H(+)</text>
        <dbReference type="Rhea" id="RHEA:26152"/>
        <dbReference type="ChEBI" id="CHEBI:15377"/>
        <dbReference type="ChEBI" id="CHEBI:15378"/>
        <dbReference type="ChEBI" id="CHEBI:15934"/>
        <dbReference type="ChEBI" id="CHEBI:43474"/>
        <dbReference type="ChEBI" id="CHEBI:58201"/>
        <dbReference type="ChEBI" id="CHEBI:58830"/>
        <dbReference type="EC" id="2.5.1.78"/>
    </reaction>
</comment>
<comment type="pathway">
    <text evidence="1">Cofactor biosynthesis; riboflavin biosynthesis; riboflavin from 2-hydroxy-3-oxobutyl phosphate and 5-amino-6-(D-ribitylamino)uracil: step 1/2.</text>
</comment>
<comment type="similarity">
    <text evidence="1">Belongs to the DMRL synthase family.</text>
</comment>
<evidence type="ECO:0000255" key="1">
    <source>
        <dbReference type="HAMAP-Rule" id="MF_00178"/>
    </source>
</evidence>
<accession>C4KIE0</accession>